<accession>A3PVC9</accession>
<keyword id="KW-0687">Ribonucleoprotein</keyword>
<keyword id="KW-0689">Ribosomal protein</keyword>
<reference key="1">
    <citation type="submission" date="2007-02" db="EMBL/GenBank/DDBJ databases">
        <title>Complete sequence of Mycobacterium sp. JLS.</title>
        <authorList>
            <consortium name="US DOE Joint Genome Institute"/>
            <person name="Copeland A."/>
            <person name="Lucas S."/>
            <person name="Lapidus A."/>
            <person name="Barry K."/>
            <person name="Detter J.C."/>
            <person name="Glavina del Rio T."/>
            <person name="Hammon N."/>
            <person name="Israni S."/>
            <person name="Dalin E."/>
            <person name="Tice H."/>
            <person name="Pitluck S."/>
            <person name="Chain P."/>
            <person name="Malfatti S."/>
            <person name="Shin M."/>
            <person name="Vergez L."/>
            <person name="Schmutz J."/>
            <person name="Larimer F."/>
            <person name="Land M."/>
            <person name="Hauser L."/>
            <person name="Kyrpides N."/>
            <person name="Mikhailova N."/>
            <person name="Miller C.D."/>
            <person name="Anderson A.J."/>
            <person name="Sims R.C."/>
            <person name="Richardson P."/>
        </authorList>
    </citation>
    <scope>NUCLEOTIDE SEQUENCE [LARGE SCALE GENOMIC DNA]</scope>
    <source>
        <strain>JLS</strain>
    </source>
</reference>
<feature type="chain" id="PRO_1000007532" description="Large ribosomal subunit protein uL29">
    <location>
        <begin position="1"/>
        <end position="77"/>
    </location>
</feature>
<proteinExistence type="inferred from homology"/>
<protein>
    <recommendedName>
        <fullName evidence="1">Large ribosomal subunit protein uL29</fullName>
    </recommendedName>
    <alternativeName>
        <fullName evidence="2">50S ribosomal protein L29</fullName>
    </alternativeName>
</protein>
<evidence type="ECO:0000255" key="1">
    <source>
        <dbReference type="HAMAP-Rule" id="MF_00374"/>
    </source>
</evidence>
<evidence type="ECO:0000305" key="2"/>
<name>RL29_MYCSJ</name>
<comment type="similarity">
    <text evidence="1">Belongs to the universal ribosomal protein uL29 family.</text>
</comment>
<gene>
    <name evidence="1" type="primary">rpmC</name>
    <name type="ordered locus">Mjls_1048</name>
</gene>
<sequence>MAVGVSPGELRELSDDELIERLRESKEELFNLRFQMATGQLSNNRRLRVVRQEIARVYTVLRERELGLASGPAGEES</sequence>
<organism>
    <name type="scientific">Mycobacterium sp. (strain JLS)</name>
    <dbReference type="NCBI Taxonomy" id="164757"/>
    <lineage>
        <taxon>Bacteria</taxon>
        <taxon>Bacillati</taxon>
        <taxon>Actinomycetota</taxon>
        <taxon>Actinomycetes</taxon>
        <taxon>Mycobacteriales</taxon>
        <taxon>Mycobacteriaceae</taxon>
        <taxon>Mycobacterium</taxon>
    </lineage>
</organism>
<dbReference type="EMBL" id="CP000580">
    <property type="protein sequence ID" value="ABN96856.1"/>
    <property type="molecule type" value="Genomic_DNA"/>
</dbReference>
<dbReference type="SMR" id="A3PVC9"/>
<dbReference type="KEGG" id="mjl:Mjls_1048"/>
<dbReference type="HOGENOM" id="CLU_158491_3_3_11"/>
<dbReference type="BioCyc" id="MSP164757:G1G8C-1061-MONOMER"/>
<dbReference type="GO" id="GO:0022625">
    <property type="term" value="C:cytosolic large ribosomal subunit"/>
    <property type="evidence" value="ECO:0007669"/>
    <property type="project" value="TreeGrafter"/>
</dbReference>
<dbReference type="GO" id="GO:0003735">
    <property type="term" value="F:structural constituent of ribosome"/>
    <property type="evidence" value="ECO:0007669"/>
    <property type="project" value="InterPro"/>
</dbReference>
<dbReference type="GO" id="GO:0006412">
    <property type="term" value="P:translation"/>
    <property type="evidence" value="ECO:0007669"/>
    <property type="project" value="UniProtKB-UniRule"/>
</dbReference>
<dbReference type="CDD" id="cd00427">
    <property type="entry name" value="Ribosomal_L29_HIP"/>
    <property type="match status" value="1"/>
</dbReference>
<dbReference type="FunFam" id="1.10.287.310:FF:000001">
    <property type="entry name" value="50S ribosomal protein L29"/>
    <property type="match status" value="1"/>
</dbReference>
<dbReference type="Gene3D" id="1.10.287.310">
    <property type="match status" value="1"/>
</dbReference>
<dbReference type="HAMAP" id="MF_00374">
    <property type="entry name" value="Ribosomal_uL29"/>
    <property type="match status" value="1"/>
</dbReference>
<dbReference type="InterPro" id="IPR050063">
    <property type="entry name" value="Ribosomal_protein_uL29"/>
</dbReference>
<dbReference type="InterPro" id="IPR001854">
    <property type="entry name" value="Ribosomal_uL29"/>
</dbReference>
<dbReference type="InterPro" id="IPR018254">
    <property type="entry name" value="Ribosomal_uL29_CS"/>
</dbReference>
<dbReference type="InterPro" id="IPR036049">
    <property type="entry name" value="Ribosomal_uL29_sf"/>
</dbReference>
<dbReference type="NCBIfam" id="TIGR00012">
    <property type="entry name" value="L29"/>
    <property type="match status" value="1"/>
</dbReference>
<dbReference type="PANTHER" id="PTHR10916">
    <property type="entry name" value="60S RIBOSOMAL PROTEIN L35/50S RIBOSOMAL PROTEIN L29"/>
    <property type="match status" value="1"/>
</dbReference>
<dbReference type="PANTHER" id="PTHR10916:SF0">
    <property type="entry name" value="LARGE RIBOSOMAL SUBUNIT PROTEIN UL29C"/>
    <property type="match status" value="1"/>
</dbReference>
<dbReference type="Pfam" id="PF00831">
    <property type="entry name" value="Ribosomal_L29"/>
    <property type="match status" value="1"/>
</dbReference>
<dbReference type="SUPFAM" id="SSF46561">
    <property type="entry name" value="Ribosomal protein L29 (L29p)"/>
    <property type="match status" value="1"/>
</dbReference>
<dbReference type="PROSITE" id="PS00579">
    <property type="entry name" value="RIBOSOMAL_L29"/>
    <property type="match status" value="1"/>
</dbReference>